<protein>
    <recommendedName>
        <fullName evidence="1">Thiazole synthase</fullName>
        <ecNumber evidence="1">2.8.1.10</ecNumber>
    </recommendedName>
</protein>
<feature type="chain" id="PRO_1000206130" description="Thiazole synthase">
    <location>
        <begin position="1"/>
        <end position="264"/>
    </location>
</feature>
<feature type="active site" description="Schiff-base intermediate with DXP" evidence="1">
    <location>
        <position position="106"/>
    </location>
</feature>
<feature type="binding site" evidence="1">
    <location>
        <position position="167"/>
    </location>
    <ligand>
        <name>1-deoxy-D-xylulose 5-phosphate</name>
        <dbReference type="ChEBI" id="CHEBI:57792"/>
    </ligand>
</feature>
<feature type="binding site" evidence="1">
    <location>
        <begin position="193"/>
        <end position="194"/>
    </location>
    <ligand>
        <name>1-deoxy-D-xylulose 5-phosphate</name>
        <dbReference type="ChEBI" id="CHEBI:57792"/>
    </ligand>
</feature>
<feature type="binding site" evidence="1">
    <location>
        <begin position="215"/>
        <end position="216"/>
    </location>
    <ligand>
        <name>1-deoxy-D-xylulose 5-phosphate</name>
        <dbReference type="ChEBI" id="CHEBI:57792"/>
    </ligand>
</feature>
<proteinExistence type="inferred from homology"/>
<gene>
    <name evidence="1" type="primary">thiG</name>
    <name type="ordered locus">Avin_02980</name>
</gene>
<organism>
    <name type="scientific">Azotobacter vinelandii (strain DJ / ATCC BAA-1303)</name>
    <dbReference type="NCBI Taxonomy" id="322710"/>
    <lineage>
        <taxon>Bacteria</taxon>
        <taxon>Pseudomonadati</taxon>
        <taxon>Pseudomonadota</taxon>
        <taxon>Gammaproteobacteria</taxon>
        <taxon>Pseudomonadales</taxon>
        <taxon>Pseudomonadaceae</taxon>
        <taxon>Azotobacter</taxon>
    </lineage>
</organism>
<sequence length="264" mass="28268">MSPARNDKPFTLAGRTYASRLLVGTGKYKDLEETRQAIEASGAEIVTVAVRRTNIGQNPGEPNLLDVINPARYTILPNTAGCYTAEEAVRTCRLARELLDGHKLVKLEVLADQKTLFPNVIETLKAAEVLVKDGFDVMVYTSDDPIIARQLAEMGCIAVMPLAGLIGTGLGICNPYNLRIILEEATVPVLVDAGVGTASDATIAMELGCEAVLMNSAIAHAQDPVLMARAMKHAIEAGRLAWLAGRMPKKLYASASSPLEGLIR</sequence>
<reference key="1">
    <citation type="journal article" date="2009" name="J. Bacteriol.">
        <title>Genome sequence of Azotobacter vinelandii, an obligate aerobe specialized to support diverse anaerobic metabolic processes.</title>
        <authorList>
            <person name="Setubal J.C."/>
            <person name="Dos Santos P."/>
            <person name="Goldman B.S."/>
            <person name="Ertesvaag H."/>
            <person name="Espin G."/>
            <person name="Rubio L.M."/>
            <person name="Valla S."/>
            <person name="Almeida N.F."/>
            <person name="Balasubramanian D."/>
            <person name="Cromes L."/>
            <person name="Curatti L."/>
            <person name="Du Z."/>
            <person name="Godsy E."/>
            <person name="Goodner B."/>
            <person name="Hellner-Burris K."/>
            <person name="Hernandez J.A."/>
            <person name="Houmiel K."/>
            <person name="Imperial J."/>
            <person name="Kennedy C."/>
            <person name="Larson T.J."/>
            <person name="Latreille P."/>
            <person name="Ligon L.S."/>
            <person name="Lu J."/>
            <person name="Maerk M."/>
            <person name="Miller N.M."/>
            <person name="Norton S."/>
            <person name="O'Carroll I.P."/>
            <person name="Paulsen I."/>
            <person name="Raulfs E.C."/>
            <person name="Roemer R."/>
            <person name="Rosser J."/>
            <person name="Segura D."/>
            <person name="Slater S."/>
            <person name="Stricklin S.L."/>
            <person name="Studholme D.J."/>
            <person name="Sun J."/>
            <person name="Viana C.J."/>
            <person name="Wallin E."/>
            <person name="Wang B."/>
            <person name="Wheeler C."/>
            <person name="Zhu H."/>
            <person name="Dean D.R."/>
            <person name="Dixon R."/>
            <person name="Wood D."/>
        </authorList>
    </citation>
    <scope>NUCLEOTIDE SEQUENCE [LARGE SCALE GENOMIC DNA]</scope>
    <source>
        <strain>DJ / ATCC BAA-1303</strain>
    </source>
</reference>
<evidence type="ECO:0000255" key="1">
    <source>
        <dbReference type="HAMAP-Rule" id="MF_00443"/>
    </source>
</evidence>
<dbReference type="EC" id="2.8.1.10" evidence="1"/>
<dbReference type="EMBL" id="CP001157">
    <property type="protein sequence ID" value="ACO76558.1"/>
    <property type="molecule type" value="Genomic_DNA"/>
</dbReference>
<dbReference type="RefSeq" id="WP_012698986.1">
    <property type="nucleotide sequence ID" value="NC_012560.1"/>
</dbReference>
<dbReference type="SMR" id="C1DI61"/>
<dbReference type="STRING" id="322710.Avin_02980"/>
<dbReference type="EnsemblBacteria" id="ACO76558">
    <property type="protein sequence ID" value="ACO76558"/>
    <property type="gene ID" value="Avin_02980"/>
</dbReference>
<dbReference type="GeneID" id="88183751"/>
<dbReference type="KEGG" id="avn:Avin_02980"/>
<dbReference type="eggNOG" id="COG2022">
    <property type="taxonomic scope" value="Bacteria"/>
</dbReference>
<dbReference type="HOGENOM" id="CLU_062233_1_1_6"/>
<dbReference type="OrthoDB" id="9805935at2"/>
<dbReference type="UniPathway" id="UPA00060"/>
<dbReference type="Proteomes" id="UP000002424">
    <property type="component" value="Chromosome"/>
</dbReference>
<dbReference type="GO" id="GO:0005737">
    <property type="term" value="C:cytoplasm"/>
    <property type="evidence" value="ECO:0007669"/>
    <property type="project" value="UniProtKB-SubCell"/>
</dbReference>
<dbReference type="GO" id="GO:1990107">
    <property type="term" value="F:thiazole synthase activity"/>
    <property type="evidence" value="ECO:0007669"/>
    <property type="project" value="UniProtKB-EC"/>
</dbReference>
<dbReference type="GO" id="GO:0009229">
    <property type="term" value="P:thiamine diphosphate biosynthetic process"/>
    <property type="evidence" value="ECO:0007669"/>
    <property type="project" value="UniProtKB-UniRule"/>
</dbReference>
<dbReference type="CDD" id="cd04728">
    <property type="entry name" value="ThiG"/>
    <property type="match status" value="1"/>
</dbReference>
<dbReference type="Gene3D" id="3.20.20.70">
    <property type="entry name" value="Aldolase class I"/>
    <property type="match status" value="1"/>
</dbReference>
<dbReference type="HAMAP" id="MF_00443">
    <property type="entry name" value="ThiG"/>
    <property type="match status" value="1"/>
</dbReference>
<dbReference type="InterPro" id="IPR013785">
    <property type="entry name" value="Aldolase_TIM"/>
</dbReference>
<dbReference type="InterPro" id="IPR033983">
    <property type="entry name" value="Thiazole_synthase_ThiG"/>
</dbReference>
<dbReference type="InterPro" id="IPR008867">
    <property type="entry name" value="ThiG"/>
</dbReference>
<dbReference type="PANTHER" id="PTHR34266">
    <property type="entry name" value="THIAZOLE SYNTHASE"/>
    <property type="match status" value="1"/>
</dbReference>
<dbReference type="PANTHER" id="PTHR34266:SF2">
    <property type="entry name" value="THIAZOLE SYNTHASE"/>
    <property type="match status" value="1"/>
</dbReference>
<dbReference type="Pfam" id="PF05690">
    <property type="entry name" value="ThiG"/>
    <property type="match status" value="1"/>
</dbReference>
<dbReference type="SUPFAM" id="SSF110399">
    <property type="entry name" value="ThiG-like"/>
    <property type="match status" value="1"/>
</dbReference>
<keyword id="KW-0963">Cytoplasm</keyword>
<keyword id="KW-0704">Schiff base</keyword>
<keyword id="KW-0784">Thiamine biosynthesis</keyword>
<keyword id="KW-0808">Transferase</keyword>
<accession>C1DI61</accession>
<comment type="function">
    <text evidence="1">Catalyzes the rearrangement of 1-deoxy-D-xylulose 5-phosphate (DXP) to produce the thiazole phosphate moiety of thiamine. Sulfur is provided by the thiocarboxylate moiety of the carrier protein ThiS. In vitro, sulfur can be provided by H(2)S.</text>
</comment>
<comment type="catalytic activity">
    <reaction evidence="1">
        <text>[ThiS sulfur-carrier protein]-C-terminal-Gly-aminoethanethioate + 2-iminoacetate + 1-deoxy-D-xylulose 5-phosphate = [ThiS sulfur-carrier protein]-C-terminal Gly-Gly + 2-[(2R,5Z)-2-carboxy-4-methylthiazol-5(2H)-ylidene]ethyl phosphate + 2 H2O + H(+)</text>
        <dbReference type="Rhea" id="RHEA:26297"/>
        <dbReference type="Rhea" id="RHEA-COMP:12909"/>
        <dbReference type="Rhea" id="RHEA-COMP:19908"/>
        <dbReference type="ChEBI" id="CHEBI:15377"/>
        <dbReference type="ChEBI" id="CHEBI:15378"/>
        <dbReference type="ChEBI" id="CHEBI:57792"/>
        <dbReference type="ChEBI" id="CHEBI:62899"/>
        <dbReference type="ChEBI" id="CHEBI:77846"/>
        <dbReference type="ChEBI" id="CHEBI:90778"/>
        <dbReference type="ChEBI" id="CHEBI:232372"/>
        <dbReference type="EC" id="2.8.1.10"/>
    </reaction>
</comment>
<comment type="pathway">
    <text evidence="1">Cofactor biosynthesis; thiamine diphosphate biosynthesis.</text>
</comment>
<comment type="subunit">
    <text evidence="1">Homotetramer. Forms heterodimers with either ThiH or ThiS.</text>
</comment>
<comment type="subcellular location">
    <subcellularLocation>
        <location evidence="1">Cytoplasm</location>
    </subcellularLocation>
</comment>
<comment type="similarity">
    <text evidence="1">Belongs to the ThiG family.</text>
</comment>
<name>THIG_AZOVD</name>